<sequence>QGLIPFPRV</sequence>
<dbReference type="GO" id="GO:0005576">
    <property type="term" value="C:extracellular region"/>
    <property type="evidence" value="ECO:0007669"/>
    <property type="project" value="UniProtKB-SubCell"/>
</dbReference>
<dbReference type="GO" id="GO:0007218">
    <property type="term" value="P:neuropeptide signaling pathway"/>
    <property type="evidence" value="ECO:0007669"/>
    <property type="project" value="UniProtKB-KW"/>
</dbReference>
<dbReference type="InterPro" id="IPR013231">
    <property type="entry name" value="Periviscerokinin"/>
</dbReference>
<dbReference type="Pfam" id="PF08259">
    <property type="entry name" value="Periviscerokin"/>
    <property type="match status" value="1"/>
</dbReference>
<protein>
    <recommendedName>
        <fullName evidence="5">Periviscerokinin-1</fullName>
    </recommendedName>
</protein>
<name>PVK1_HOPMA</name>
<evidence type="ECO:0000250" key="1">
    <source>
        <dbReference type="UniProtKB" id="P83923"/>
    </source>
</evidence>
<evidence type="ECO:0000250" key="2">
    <source>
        <dbReference type="UniProtKB" id="P84375"/>
    </source>
</evidence>
<evidence type="ECO:0000255" key="3"/>
<evidence type="ECO:0000269" key="4">
    <source>
    </source>
</evidence>
<evidence type="ECO:0000303" key="5">
    <source>
    </source>
</evidence>
<evidence type="ECO:0000305" key="6"/>
<comment type="function">
    <text evidence="1">Mediates visceral muscle contractile activity (myotropic activity).</text>
</comment>
<comment type="subcellular location">
    <subcellularLocation>
        <location evidence="2">Secreted</location>
    </subcellularLocation>
</comment>
<comment type="mass spectrometry"/>
<comment type="mass spectrometry">
    <text>With pyroglutamate at Gln-1.</text>
</comment>
<comment type="similarity">
    <text evidence="3">Belongs to the periviscerokinin family.</text>
</comment>
<reference evidence="6" key="1">
    <citation type="journal article" date="2010" name="Peptides">
        <title>CAPA-peptides of praying mantids (Mantodea).</title>
        <authorList>
            <person name="Koehler R."/>
            <person name="Predel R."/>
        </authorList>
    </citation>
    <scope>PROTEIN SEQUENCE</scope>
    <scope>MASS SPECTROMETRY</scope>
    <scope>PYROGLUTAMATE FORMATION AT GLN-1</scope>
    <scope>AMIDATION AT VAL-9</scope>
    <source>
        <tissue evidence="4">Abdominal perisympathetic organs</tissue>
    </source>
</reference>
<keyword id="KW-0027">Amidation</keyword>
<keyword id="KW-0903">Direct protein sequencing</keyword>
<keyword id="KW-0527">Neuropeptide</keyword>
<keyword id="KW-0873">Pyrrolidone carboxylic acid</keyword>
<keyword id="KW-0964">Secreted</keyword>
<proteinExistence type="evidence at protein level"/>
<accession>P86657</accession>
<organism>
    <name type="scientific">Hoplocorypha cf. macra (strain RK-2010)</name>
    <name type="common">Praying mantis</name>
    <dbReference type="NCBI Taxonomy" id="765347"/>
    <lineage>
        <taxon>Eukaryota</taxon>
        <taxon>Metazoa</taxon>
        <taxon>Ecdysozoa</taxon>
        <taxon>Arthropoda</taxon>
        <taxon>Hexapoda</taxon>
        <taxon>Insecta</taxon>
        <taxon>Pterygota</taxon>
        <taxon>Neoptera</taxon>
        <taxon>Polyneoptera</taxon>
        <taxon>Dictyoptera</taxon>
        <taxon>Mantodea</taxon>
        <taxon>Eumantodea</taxon>
        <taxon>Thespoidea</taxon>
        <taxon>Thespidae</taxon>
        <taxon>Hoplocoryphinae</taxon>
        <taxon>Hoplocorypha</taxon>
    </lineage>
</organism>
<feature type="peptide" id="PRO_0000395570" description="Periviscerokinin-1" evidence="4">
    <location>
        <begin position="1"/>
        <end position="9"/>
    </location>
</feature>
<feature type="modified residue" description="Pyrrolidone carboxylic acid; partial" evidence="4">
    <location>
        <position position="1"/>
    </location>
</feature>
<feature type="modified residue" description="Valine amide" evidence="4">
    <location>
        <position position="9"/>
    </location>
</feature>
<feature type="unsure residue" description="L or I" evidence="4">
    <location>
        <position position="3"/>
    </location>
</feature>
<feature type="unsure residue" description="I or L" evidence="4">
    <location>
        <position position="4"/>
    </location>
</feature>